<comment type="function">
    <text evidence="1">Probably involved in ribonucleotide reductase function.</text>
</comment>
<comment type="similarity">
    <text evidence="2">Belongs to the NrdI family.</text>
</comment>
<protein>
    <recommendedName>
        <fullName>Protein NrdI</fullName>
    </recommendedName>
</protein>
<keyword id="KW-1185">Reference proteome</keyword>
<organism>
    <name type="scientific">Mycobacterium bovis (strain ATCC BAA-935 / AF2122/97)</name>
    <dbReference type="NCBI Taxonomy" id="233413"/>
    <lineage>
        <taxon>Bacteria</taxon>
        <taxon>Bacillati</taxon>
        <taxon>Actinomycetota</taxon>
        <taxon>Actinomycetes</taxon>
        <taxon>Mycobacteriales</taxon>
        <taxon>Mycobacteriaceae</taxon>
        <taxon>Mycobacterium</taxon>
        <taxon>Mycobacterium tuberculosis complex</taxon>
    </lineage>
</organism>
<evidence type="ECO:0000250" key="1"/>
<evidence type="ECO:0000305" key="2"/>
<dbReference type="EMBL" id="LT708304">
    <property type="protein sequence ID" value="SIU01703.1"/>
    <property type="molecule type" value="Genomic_DNA"/>
</dbReference>
<dbReference type="RefSeq" id="NP_856723.1">
    <property type="nucleotide sequence ID" value="NC_002945.3"/>
</dbReference>
<dbReference type="RefSeq" id="WP_003415981.1">
    <property type="nucleotide sequence ID" value="NC_002945.4"/>
</dbReference>
<dbReference type="SMR" id="P65549"/>
<dbReference type="GeneID" id="45427045"/>
<dbReference type="KEGG" id="mbo:BQ2027_MB3078C"/>
<dbReference type="PATRIC" id="fig|233413.5.peg.3382"/>
<dbReference type="Proteomes" id="UP000001419">
    <property type="component" value="Chromosome"/>
</dbReference>
<dbReference type="GO" id="GO:0010181">
    <property type="term" value="F:FMN binding"/>
    <property type="evidence" value="ECO:0007669"/>
    <property type="project" value="InterPro"/>
</dbReference>
<dbReference type="GO" id="GO:0036211">
    <property type="term" value="P:protein modification process"/>
    <property type="evidence" value="ECO:0007669"/>
    <property type="project" value="InterPro"/>
</dbReference>
<dbReference type="FunFam" id="3.40.50.360:FF:000005">
    <property type="entry name" value="Protein NrdI"/>
    <property type="match status" value="1"/>
</dbReference>
<dbReference type="Gene3D" id="3.40.50.360">
    <property type="match status" value="1"/>
</dbReference>
<dbReference type="HAMAP" id="MF_00128">
    <property type="entry name" value="NrdI"/>
    <property type="match status" value="1"/>
</dbReference>
<dbReference type="InterPro" id="IPR029039">
    <property type="entry name" value="Flavoprotein-like_sf"/>
</dbReference>
<dbReference type="InterPro" id="IPR020852">
    <property type="entry name" value="RNR_Ib_NrdI_bac"/>
</dbReference>
<dbReference type="InterPro" id="IPR004465">
    <property type="entry name" value="RNR_NrdI"/>
</dbReference>
<dbReference type="NCBIfam" id="TIGR00333">
    <property type="entry name" value="nrdI"/>
    <property type="match status" value="1"/>
</dbReference>
<dbReference type="PANTHER" id="PTHR37297">
    <property type="entry name" value="PROTEIN NRDI"/>
    <property type="match status" value="1"/>
</dbReference>
<dbReference type="PANTHER" id="PTHR37297:SF1">
    <property type="entry name" value="PROTEIN NRDI"/>
    <property type="match status" value="1"/>
</dbReference>
<dbReference type="Pfam" id="PF07972">
    <property type="entry name" value="Flavodoxin_NdrI"/>
    <property type="match status" value="1"/>
</dbReference>
<dbReference type="PIRSF" id="PIRSF005087">
    <property type="entry name" value="NrdI"/>
    <property type="match status" value="1"/>
</dbReference>
<dbReference type="SUPFAM" id="SSF52218">
    <property type="entry name" value="Flavoproteins"/>
    <property type="match status" value="1"/>
</dbReference>
<accession>P65549</accession>
<accession>A0A1R3Y2Z7</accession>
<accession>P95107</accession>
<accession>X2BM85</accession>
<name>NRDI_MYCBO</name>
<reference key="1">
    <citation type="journal article" date="2003" name="Proc. Natl. Acad. Sci. U.S.A.">
        <title>The complete genome sequence of Mycobacterium bovis.</title>
        <authorList>
            <person name="Garnier T."/>
            <person name="Eiglmeier K."/>
            <person name="Camus J.-C."/>
            <person name="Medina N."/>
            <person name="Mansoor H."/>
            <person name="Pryor M."/>
            <person name="Duthoy S."/>
            <person name="Grondin S."/>
            <person name="Lacroix C."/>
            <person name="Monsempe C."/>
            <person name="Simon S."/>
            <person name="Harris B."/>
            <person name="Atkin R."/>
            <person name="Doggett J."/>
            <person name="Mayes R."/>
            <person name="Keating L."/>
            <person name="Wheeler P.R."/>
            <person name="Parkhill J."/>
            <person name="Barrell B.G."/>
            <person name="Cole S.T."/>
            <person name="Gordon S.V."/>
            <person name="Hewinson R.G."/>
        </authorList>
    </citation>
    <scope>NUCLEOTIDE SEQUENCE [LARGE SCALE GENOMIC DNA]</scope>
    <source>
        <strain>ATCC BAA-935 / AF2122/97</strain>
    </source>
</reference>
<reference key="2">
    <citation type="journal article" date="2017" name="Genome Announc.">
        <title>Updated reference genome sequence and annotation of Mycobacterium bovis AF2122/97.</title>
        <authorList>
            <person name="Malone K.M."/>
            <person name="Farrell D."/>
            <person name="Stuber T.P."/>
            <person name="Schubert O.T."/>
            <person name="Aebersold R."/>
            <person name="Robbe-Austerman S."/>
            <person name="Gordon S.V."/>
        </authorList>
    </citation>
    <scope>NUCLEOTIDE SEQUENCE [LARGE SCALE GENOMIC DNA]</scope>
    <scope>GENOME REANNOTATION</scope>
    <source>
        <strain>ATCC BAA-935 / AF2122/97</strain>
    </source>
</reference>
<gene>
    <name type="primary">nrdI</name>
    <name type="ordered locus">BQ2027_MB3078C</name>
</gene>
<proteinExistence type="inferred from homology"/>
<sequence length="150" mass="16491">MDIAGRSLVYFSSVSENTHRFVQKLGIPATRIPLHGRIEVDEPYVLILPTYGGGRANPGLDAGGYVPKQVIAFLNNDHNRAQLRGVIAAGNTNFGAEFCYAGDVVSRKCSVPYLYRFELMGTEDDVAAVRTGLAEFWKEQTCHQPSLQSL</sequence>
<feature type="chain" id="PRO_0000164325" description="Protein NrdI">
    <location>
        <begin position="1"/>
        <end position="150"/>
    </location>
</feature>